<protein>
    <recommendedName>
        <fullName>Replication-associated protein</fullName>
        <ecNumber>2.7.7.-</ecNumber>
        <ecNumber>3.1.21.-</ecNumber>
        <ecNumber>3.6.1.-</ecNumber>
    </recommendedName>
    <alternativeName>
        <fullName>ATP-dependent helicase Rep</fullName>
    </alternativeName>
    <alternativeName>
        <fullName>RepP</fullName>
    </alternativeName>
</protein>
<name>REP_GOCV</name>
<feature type="chain" id="PRO_0000319864" description="Replication-associated protein">
    <location>
        <begin position="1"/>
        <end position="293"/>
    </location>
</feature>
<feature type="domain" description="CRESS-DNA virus Rep endonuclease" evidence="3">
    <location>
        <begin position="6"/>
        <end position="105"/>
    </location>
</feature>
<feature type="short sequence motif" description="Nuclear localization signal" evidence="2">
    <location>
        <begin position="3"/>
        <end position="13"/>
    </location>
</feature>
<feature type="short sequence motif" description="RCR-1" evidence="3">
    <location>
        <begin position="13"/>
        <end position="16"/>
    </location>
</feature>
<feature type="short sequence motif" description="RCR-2" evidence="3">
    <location>
        <begin position="53"/>
        <end position="55"/>
    </location>
</feature>
<feature type="short sequence motif" description="Nuclear localization signal" evidence="2">
    <location>
        <begin position="62"/>
        <end position="83"/>
    </location>
</feature>
<feature type="short sequence motif" description="RCR-3" evidence="3">
    <location>
        <begin position="92"/>
        <end position="95"/>
    </location>
</feature>
<feature type="active site" description="For DNA cleavage activity" evidence="3">
    <location>
        <position position="92"/>
    </location>
</feature>
<feature type="binding site" evidence="2">
    <location>
        <position position="44"/>
    </location>
    <ligand>
        <name>a divalent metal cation</name>
        <dbReference type="ChEBI" id="CHEBI:60240"/>
    </ligand>
</feature>
<feature type="binding site" evidence="2">
    <location>
        <position position="53"/>
    </location>
    <ligand>
        <name>a divalent metal cation</name>
        <dbReference type="ChEBI" id="CHEBI:60240"/>
    </ligand>
</feature>
<feature type="binding site" evidence="2">
    <location>
        <position position="96"/>
    </location>
    <ligand>
        <name>a divalent metal cation</name>
        <dbReference type="ChEBI" id="CHEBI:60240"/>
    </ligand>
</feature>
<feature type="binding site" evidence="1">
    <location>
        <begin position="168"/>
        <end position="175"/>
    </location>
    <ligand>
        <name>ATP</name>
        <dbReference type="ChEBI" id="CHEBI:30616"/>
    </ligand>
</feature>
<accession>Q91EK3</accession>
<proteinExistence type="inferred from homology"/>
<gene>
    <name type="primary">rep</name>
</gene>
<organismHost>
    <name type="scientific">Anser</name>
    <name type="common">geese</name>
    <dbReference type="NCBI Taxonomy" id="8842"/>
</organismHost>
<comment type="function">
    <text evidence="1">Essential for the replication of viral ssDNA. The closed circular ssDNA genome is first converted to a superhelical dsDNA. Rep and/or Rep' binds a specific hairpin at the genome origin of replication. Introduces an endonucleolytic nick within the conserved sequence 5'-AGTATTAC-3' in the intergenic region of the genome, thereby initiating the rolling circle replication (RCR). Following cleavage, binds covalently to the 5'-phosphate of DNA as a tyrosyl ester. The cleavage gives rise to a free 3'-OH that serves as a primer for the cellular DNA polymerase. The polymerase synthesizes the (+) strand DNA by rolling circle mechanism. After one round of replication, a Rep-catalyzed nucleotidyl transfer reaction releases a circular single-stranded virus genome, thereby terminating the replication. Displays origin-specific DNA cleavage, nucleotidyl transferase, ATPase and helicase activities. ATPase activity is probably carried by the isoform Rep (By similarity).</text>
</comment>
<comment type="catalytic activity">
    <reaction>
        <text>ATP + H2O = ADP + phosphate + H(+)</text>
        <dbReference type="Rhea" id="RHEA:13065"/>
        <dbReference type="ChEBI" id="CHEBI:15377"/>
        <dbReference type="ChEBI" id="CHEBI:15378"/>
        <dbReference type="ChEBI" id="CHEBI:30616"/>
        <dbReference type="ChEBI" id="CHEBI:43474"/>
        <dbReference type="ChEBI" id="CHEBI:456216"/>
    </reaction>
</comment>
<comment type="cofactor">
    <cofactor evidence="4">
        <name>Mg(2+)</name>
        <dbReference type="ChEBI" id="CHEBI:18420"/>
    </cofactor>
    <cofactor evidence="4">
        <name>Mn(2+)</name>
        <dbReference type="ChEBI" id="CHEBI:29035"/>
    </cofactor>
    <text evidence="4">Divalent metal cations, possibly Mg(2+) or Mn(2+).</text>
</comment>
<comment type="subunit">
    <text evidence="1">Interacts with the capsid protein; this interaction relocates Rep into the nucleus.</text>
</comment>
<comment type="subcellular location">
    <subcellularLocation>
        <location evidence="4">Host nucleus</location>
    </subcellularLocation>
</comment>
<comment type="domain">
    <text>There are 3 rolling circle replication (RCR) motifs. RCR-2 is probably involved in metal coordination. RCR-3 is required for phosphodiester bond cleavage for initiation of RCR.</text>
</comment>
<comment type="similarity">
    <text evidence="4">Belongs to the nanoviruses/circoviruses replication-associated protein family.</text>
</comment>
<reference key="1">
    <citation type="journal article" date="2001" name="Virology">
        <title>Genome sequence determinations and analyses of novel circoviruses from goose and pigeon.</title>
        <authorList>
            <person name="Todd D."/>
            <person name="Weston J.H."/>
            <person name="Soike D."/>
            <person name="Smyth J.A."/>
        </authorList>
    </citation>
    <scope>NUCLEOTIDE SEQUENCE [GENOMIC DNA]</scope>
</reference>
<keyword id="KW-0067">ATP-binding</keyword>
<keyword id="KW-0190">Covalent protein-DNA linkage</keyword>
<keyword id="KW-0235">DNA replication</keyword>
<keyword id="KW-0238">DNA-binding</keyword>
<keyword id="KW-0255">Endonuclease</keyword>
<keyword id="KW-0347">Helicase</keyword>
<keyword id="KW-1048">Host nucleus</keyword>
<keyword id="KW-0378">Hydrolase</keyword>
<keyword id="KW-0479">Metal-binding</keyword>
<keyword id="KW-0511">Multifunctional enzyme</keyword>
<keyword id="KW-0540">Nuclease</keyword>
<keyword id="KW-0547">Nucleotide-binding</keyword>
<keyword id="KW-0548">Nucleotidyltransferase</keyword>
<keyword id="KW-1185">Reference proteome</keyword>
<keyword id="KW-0808">Transferase</keyword>
<sequence>MAKNGNYSYKRWVFTINNPTFEDYCAVVEFCNLDNCKFAIVGEEKGEKEGTPHLQGFLSLRKNAKAAALEENLGGRAWLSRARGSDEDNEEYCSKESTYLRVGEPNRKGRSSDLPDAASDVLAGLPITDVARKYPTTYVMFGRGLERLRQLIVETARDWKTEVIVLIGRPGSGKSRYAFEFPAREKYYKSRGKWWDGYNGQDVVVMDDFYGWLPYDDLLRICDRYPLRVEYKGGMTQFVAKTLIITSNREPRDWYKCEFDVSALYRRINQYLILTPDGYAPAPEFMLPFKINY</sequence>
<evidence type="ECO:0000250" key="1"/>
<evidence type="ECO:0000255" key="2"/>
<evidence type="ECO:0000255" key="3">
    <source>
        <dbReference type="PROSITE-ProRule" id="PRU01364"/>
    </source>
</evidence>
<evidence type="ECO:0000305" key="4"/>
<organism>
    <name type="scientific">Goose circovirus</name>
    <name type="common">GoCV</name>
    <dbReference type="NCBI Taxonomy" id="146032"/>
    <lineage>
        <taxon>Viruses</taxon>
        <taxon>Monodnaviria</taxon>
        <taxon>Shotokuvirae</taxon>
        <taxon>Cressdnaviricota</taxon>
        <taxon>Arfiviricetes</taxon>
        <taxon>Cirlivirales</taxon>
        <taxon>Circoviridae</taxon>
        <taxon>Circovirus</taxon>
        <taxon>Circovirus goose</taxon>
    </lineage>
</organism>
<dbReference type="EC" id="2.7.7.-"/>
<dbReference type="EC" id="3.1.21.-"/>
<dbReference type="EC" id="3.6.1.-"/>
<dbReference type="EMBL" id="AJ304456">
    <property type="protein sequence ID" value="CAC50261.1"/>
    <property type="molecule type" value="Genomic_DNA"/>
</dbReference>
<dbReference type="RefSeq" id="NP_150368.1">
    <property type="nucleotide sequence ID" value="NC_003054.1"/>
</dbReference>
<dbReference type="SMR" id="Q91EK3"/>
<dbReference type="GeneID" id="921700"/>
<dbReference type="KEGG" id="vg:921700"/>
<dbReference type="OrthoDB" id="9195at10239"/>
<dbReference type="Proteomes" id="UP000185275">
    <property type="component" value="Genome"/>
</dbReference>
<dbReference type="GO" id="GO:0042025">
    <property type="term" value="C:host cell nucleus"/>
    <property type="evidence" value="ECO:0007669"/>
    <property type="project" value="UniProtKB-SubCell"/>
</dbReference>
<dbReference type="GO" id="GO:0005524">
    <property type="term" value="F:ATP binding"/>
    <property type="evidence" value="ECO:0007669"/>
    <property type="project" value="UniProtKB-KW"/>
</dbReference>
<dbReference type="GO" id="GO:0016887">
    <property type="term" value="F:ATP hydrolysis activity"/>
    <property type="evidence" value="ECO:0007669"/>
    <property type="project" value="RHEA"/>
</dbReference>
<dbReference type="GO" id="GO:0003677">
    <property type="term" value="F:DNA binding"/>
    <property type="evidence" value="ECO:0007669"/>
    <property type="project" value="UniProtKB-KW"/>
</dbReference>
<dbReference type="GO" id="GO:0004519">
    <property type="term" value="F:endonuclease activity"/>
    <property type="evidence" value="ECO:0007669"/>
    <property type="project" value="UniProtKB-KW"/>
</dbReference>
<dbReference type="GO" id="GO:0046872">
    <property type="term" value="F:metal ion binding"/>
    <property type="evidence" value="ECO:0007669"/>
    <property type="project" value="UniProtKB-KW"/>
</dbReference>
<dbReference type="GO" id="GO:0016779">
    <property type="term" value="F:nucleotidyltransferase activity"/>
    <property type="evidence" value="ECO:0007669"/>
    <property type="project" value="UniProtKB-KW"/>
</dbReference>
<dbReference type="GO" id="GO:0003723">
    <property type="term" value="F:RNA binding"/>
    <property type="evidence" value="ECO:0007669"/>
    <property type="project" value="InterPro"/>
</dbReference>
<dbReference type="GO" id="GO:0003724">
    <property type="term" value="F:RNA helicase activity"/>
    <property type="evidence" value="ECO:0007669"/>
    <property type="project" value="InterPro"/>
</dbReference>
<dbReference type="GO" id="GO:0006260">
    <property type="term" value="P:DNA replication"/>
    <property type="evidence" value="ECO:0007669"/>
    <property type="project" value="UniProtKB-KW"/>
</dbReference>
<dbReference type="Gene3D" id="3.40.1310.20">
    <property type="match status" value="1"/>
</dbReference>
<dbReference type="Gene3D" id="3.40.50.300">
    <property type="entry name" value="P-loop containing nucleotide triphosphate hydrolases"/>
    <property type="match status" value="1"/>
</dbReference>
<dbReference type="InterPro" id="IPR049912">
    <property type="entry name" value="CRESS_DNA_REP"/>
</dbReference>
<dbReference type="InterPro" id="IPR000605">
    <property type="entry name" value="Helicase_SF3_ssDNA/RNA_vir"/>
</dbReference>
<dbReference type="InterPro" id="IPR027417">
    <property type="entry name" value="P-loop_NTPase"/>
</dbReference>
<dbReference type="Pfam" id="PF00910">
    <property type="entry name" value="RNA_helicase"/>
    <property type="match status" value="1"/>
</dbReference>
<dbReference type="Pfam" id="PF02407">
    <property type="entry name" value="Viral_Rep"/>
    <property type="match status" value="1"/>
</dbReference>
<dbReference type="SUPFAM" id="SSF52540">
    <property type="entry name" value="P-loop containing nucleoside triphosphate hydrolases"/>
    <property type="match status" value="1"/>
</dbReference>
<dbReference type="PROSITE" id="PS52020">
    <property type="entry name" value="CRESS_DNA_REP"/>
    <property type="match status" value="1"/>
</dbReference>